<proteinExistence type="inferred from homology"/>
<comment type="function">
    <text evidence="5">May act as a catecholamine-responsive trans-membrane electron transporter.</text>
</comment>
<comment type="cofactor">
    <cofactor evidence="1">
        <name>heme b</name>
        <dbReference type="ChEBI" id="CHEBI:60344"/>
    </cofactor>
    <text evidence="1">Binds 2 heme b groups non-covalently.</text>
</comment>
<comment type="subcellular location">
    <subcellularLocation>
        <location evidence="7">Membrane</location>
        <topology evidence="7">Multi-pass membrane protein</topology>
    </subcellularLocation>
</comment>
<comment type="domain">
    <text evidence="5 6">DOMON domain could bind catecholamines and thereby could regulate the cytochrome b561 domain function (PubMed:15022831). DOMON domain could bind one heme b (PubMed:19386804).</text>
</comment>
<dbReference type="EMBL" id="AL163527">
    <property type="protein sequence ID" value="CAB86935.1"/>
    <property type="molecule type" value="Genomic_DNA"/>
</dbReference>
<dbReference type="EMBL" id="CP002686">
    <property type="protein sequence ID" value="AEE79872.1"/>
    <property type="molecule type" value="Genomic_DNA"/>
</dbReference>
<dbReference type="PIR" id="T47789">
    <property type="entry name" value="T47789"/>
</dbReference>
<dbReference type="RefSeq" id="NP_191466.1">
    <property type="nucleotide sequence ID" value="NM_115769.1"/>
</dbReference>
<dbReference type="STRING" id="3702.Q9LYS9"/>
<dbReference type="PaxDb" id="3702-AT3G59070.1"/>
<dbReference type="EnsemblPlants" id="AT3G59070.1">
    <property type="protein sequence ID" value="AT3G59070.1"/>
    <property type="gene ID" value="AT3G59070"/>
</dbReference>
<dbReference type="GeneID" id="825076"/>
<dbReference type="Gramene" id="AT3G59070.1">
    <property type="protein sequence ID" value="AT3G59070.1"/>
    <property type="gene ID" value="AT3G59070"/>
</dbReference>
<dbReference type="KEGG" id="ath:AT3G59070"/>
<dbReference type="Araport" id="AT3G59070"/>
<dbReference type="TAIR" id="AT3G59070"/>
<dbReference type="eggNOG" id="KOG4293">
    <property type="taxonomic scope" value="Eukaryota"/>
</dbReference>
<dbReference type="HOGENOM" id="CLU_036675_1_0_1"/>
<dbReference type="InParanoid" id="Q9LYS9"/>
<dbReference type="OMA" id="ICCIAAF"/>
<dbReference type="PhylomeDB" id="Q9LYS9"/>
<dbReference type="PRO" id="PR:Q9LYS9"/>
<dbReference type="Proteomes" id="UP000006548">
    <property type="component" value="Chromosome 3"/>
</dbReference>
<dbReference type="ExpressionAtlas" id="Q9LYS9">
    <property type="expression patterns" value="baseline and differential"/>
</dbReference>
<dbReference type="GO" id="GO:0016020">
    <property type="term" value="C:membrane"/>
    <property type="evidence" value="ECO:0007669"/>
    <property type="project" value="UniProtKB-SubCell"/>
</dbReference>
<dbReference type="GO" id="GO:0046872">
    <property type="term" value="F:metal ion binding"/>
    <property type="evidence" value="ECO:0007669"/>
    <property type="project" value="UniProtKB-KW"/>
</dbReference>
<dbReference type="CDD" id="cd08760">
    <property type="entry name" value="Cyt_b561_FRRS1_like"/>
    <property type="match status" value="1"/>
</dbReference>
<dbReference type="CDD" id="cd09629">
    <property type="entry name" value="DOMON_CIL1_like"/>
    <property type="match status" value="1"/>
</dbReference>
<dbReference type="Gene3D" id="1.20.120.1770">
    <property type="match status" value="1"/>
</dbReference>
<dbReference type="InterPro" id="IPR045265">
    <property type="entry name" value="AIR12_DOMON"/>
</dbReference>
<dbReference type="InterPro" id="IPR006593">
    <property type="entry name" value="Cyt_b561/ferric_Rdtase_TM"/>
</dbReference>
<dbReference type="InterPro" id="IPR005018">
    <property type="entry name" value="DOMON_domain"/>
</dbReference>
<dbReference type="PANTHER" id="PTHR23130">
    <property type="entry name" value="CYTOCHROME B561 AND DOMON DOMAIN-CONTAINING PROTEIN"/>
    <property type="match status" value="1"/>
</dbReference>
<dbReference type="PANTHER" id="PTHR23130:SF174">
    <property type="entry name" value="CYTOCHROME B561 AND DOMON DOMAIN-CONTAINING PROTEIN"/>
    <property type="match status" value="1"/>
</dbReference>
<dbReference type="Pfam" id="PF03188">
    <property type="entry name" value="Cytochrom_B561"/>
    <property type="match status" value="1"/>
</dbReference>
<dbReference type="Pfam" id="PF04526">
    <property type="entry name" value="DUF568"/>
    <property type="match status" value="1"/>
</dbReference>
<dbReference type="SMART" id="SM00665">
    <property type="entry name" value="B561"/>
    <property type="match status" value="1"/>
</dbReference>
<dbReference type="PROSITE" id="PS50939">
    <property type="entry name" value="CYTOCHROME_B561"/>
    <property type="match status" value="1"/>
</dbReference>
<dbReference type="PROSITE" id="PS50836">
    <property type="entry name" value="DOMON"/>
    <property type="match status" value="1"/>
</dbReference>
<accession>Q9LYS9</accession>
<protein>
    <recommendedName>
        <fullName>Cytochrome b561 and DOMON domain-containing protein At3g59070</fullName>
    </recommendedName>
    <alternativeName>
        <fullName>Protein b561A.tha8</fullName>
    </alternativeName>
</protein>
<feature type="signal peptide" evidence="2">
    <location>
        <begin position="1"/>
        <end position="25"/>
    </location>
</feature>
<feature type="chain" id="PRO_0000430476" description="Cytochrome b561 and DOMON domain-containing protein At3g59070">
    <location>
        <begin position="26"/>
        <end position="466"/>
    </location>
</feature>
<feature type="transmembrane region" description="Helical; Name=1" evidence="2">
    <location>
        <begin position="219"/>
        <end position="239"/>
    </location>
</feature>
<feature type="transmembrane region" description="Helical; Name=2" evidence="2">
    <location>
        <begin position="252"/>
        <end position="272"/>
    </location>
</feature>
<feature type="transmembrane region" description="Helical; Name=3" evidence="2">
    <location>
        <begin position="287"/>
        <end position="307"/>
    </location>
</feature>
<feature type="transmembrane region" description="Helical; Name=4" evidence="2">
    <location>
        <begin position="327"/>
        <end position="347"/>
    </location>
</feature>
<feature type="transmembrane region" description="Helical; Name=5" evidence="2">
    <location>
        <begin position="355"/>
        <end position="375"/>
    </location>
</feature>
<feature type="domain" description="DOMON" evidence="4">
    <location>
        <begin position="57"/>
        <end position="172"/>
    </location>
</feature>
<feature type="domain" description="Cytochrome b561" evidence="3">
    <location>
        <begin position="179"/>
        <end position="380"/>
    </location>
</feature>
<feature type="binding site" description="axial binding residue" evidence="1">
    <location>
        <position position="220"/>
    </location>
    <ligand>
        <name>heme b</name>
        <dbReference type="ChEBI" id="CHEBI:60344"/>
        <label>1</label>
    </ligand>
    <ligandPart>
        <name>Fe</name>
        <dbReference type="ChEBI" id="CHEBI:18248"/>
    </ligandPart>
</feature>
<feature type="binding site" description="axial binding residue" evidence="1">
    <location>
        <position position="256"/>
    </location>
    <ligand>
        <name>heme b</name>
        <dbReference type="ChEBI" id="CHEBI:60344"/>
        <label>2</label>
    </ligand>
    <ligandPart>
        <name>Fe</name>
        <dbReference type="ChEBI" id="CHEBI:18248"/>
    </ligandPart>
</feature>
<feature type="binding site" description="axial binding residue" evidence="1">
    <location>
        <position position="289"/>
    </location>
    <ligand>
        <name>heme b</name>
        <dbReference type="ChEBI" id="CHEBI:60344"/>
        <label>1</label>
    </ligand>
    <ligandPart>
        <name>Fe</name>
        <dbReference type="ChEBI" id="CHEBI:18248"/>
    </ligandPart>
</feature>
<feature type="binding site" description="axial binding residue" evidence="1">
    <location>
        <position position="325"/>
    </location>
    <ligand>
        <name>heme b</name>
        <dbReference type="ChEBI" id="CHEBI:60344"/>
        <label>2</label>
    </ligand>
    <ligandPart>
        <name>Fe</name>
        <dbReference type="ChEBI" id="CHEBI:18248"/>
    </ligandPart>
</feature>
<reference key="1">
    <citation type="journal article" date="2000" name="Nature">
        <title>Sequence and analysis of chromosome 3 of the plant Arabidopsis thaliana.</title>
        <authorList>
            <person name="Salanoubat M."/>
            <person name="Lemcke K."/>
            <person name="Rieger M."/>
            <person name="Ansorge W."/>
            <person name="Unseld M."/>
            <person name="Fartmann B."/>
            <person name="Valle G."/>
            <person name="Bloecker H."/>
            <person name="Perez-Alonso M."/>
            <person name="Obermaier B."/>
            <person name="Delseny M."/>
            <person name="Boutry M."/>
            <person name="Grivell L.A."/>
            <person name="Mache R."/>
            <person name="Puigdomenech P."/>
            <person name="De Simone V."/>
            <person name="Choisne N."/>
            <person name="Artiguenave F."/>
            <person name="Robert C."/>
            <person name="Brottier P."/>
            <person name="Wincker P."/>
            <person name="Cattolico L."/>
            <person name="Weissenbach J."/>
            <person name="Saurin W."/>
            <person name="Quetier F."/>
            <person name="Schaefer M."/>
            <person name="Mueller-Auer S."/>
            <person name="Gabel C."/>
            <person name="Fuchs M."/>
            <person name="Benes V."/>
            <person name="Wurmbach E."/>
            <person name="Drzonek H."/>
            <person name="Erfle H."/>
            <person name="Jordan N."/>
            <person name="Bangert S."/>
            <person name="Wiedelmann R."/>
            <person name="Kranz H."/>
            <person name="Voss H."/>
            <person name="Holland R."/>
            <person name="Brandt P."/>
            <person name="Nyakatura G."/>
            <person name="Vezzi A."/>
            <person name="D'Angelo M."/>
            <person name="Pallavicini A."/>
            <person name="Toppo S."/>
            <person name="Simionati B."/>
            <person name="Conrad A."/>
            <person name="Hornischer K."/>
            <person name="Kauer G."/>
            <person name="Loehnert T.-H."/>
            <person name="Nordsiek G."/>
            <person name="Reichelt J."/>
            <person name="Scharfe M."/>
            <person name="Schoen O."/>
            <person name="Bargues M."/>
            <person name="Terol J."/>
            <person name="Climent J."/>
            <person name="Navarro P."/>
            <person name="Collado C."/>
            <person name="Perez-Perez A."/>
            <person name="Ottenwaelder B."/>
            <person name="Duchemin D."/>
            <person name="Cooke R."/>
            <person name="Laudie M."/>
            <person name="Berger-Llauro C."/>
            <person name="Purnelle B."/>
            <person name="Masuy D."/>
            <person name="de Haan M."/>
            <person name="Maarse A.C."/>
            <person name="Alcaraz J.-P."/>
            <person name="Cottet A."/>
            <person name="Casacuberta E."/>
            <person name="Monfort A."/>
            <person name="Argiriou A."/>
            <person name="Flores M."/>
            <person name="Liguori R."/>
            <person name="Vitale D."/>
            <person name="Mannhaupt G."/>
            <person name="Haase D."/>
            <person name="Schoof H."/>
            <person name="Rudd S."/>
            <person name="Zaccaria P."/>
            <person name="Mewes H.-W."/>
            <person name="Mayer K.F.X."/>
            <person name="Kaul S."/>
            <person name="Town C.D."/>
            <person name="Koo H.L."/>
            <person name="Tallon L.J."/>
            <person name="Jenkins J."/>
            <person name="Rooney T."/>
            <person name="Rizzo M."/>
            <person name="Walts A."/>
            <person name="Utterback T."/>
            <person name="Fujii C.Y."/>
            <person name="Shea T.P."/>
            <person name="Creasy T.H."/>
            <person name="Haas B."/>
            <person name="Maiti R."/>
            <person name="Wu D."/>
            <person name="Peterson J."/>
            <person name="Van Aken S."/>
            <person name="Pai G."/>
            <person name="Militscher J."/>
            <person name="Sellers P."/>
            <person name="Gill J.E."/>
            <person name="Feldblyum T.V."/>
            <person name="Preuss D."/>
            <person name="Lin X."/>
            <person name="Nierman W.C."/>
            <person name="Salzberg S.L."/>
            <person name="White O."/>
            <person name="Venter J.C."/>
            <person name="Fraser C.M."/>
            <person name="Kaneko T."/>
            <person name="Nakamura Y."/>
            <person name="Sato S."/>
            <person name="Kato T."/>
            <person name="Asamizu E."/>
            <person name="Sasamoto S."/>
            <person name="Kimura T."/>
            <person name="Idesawa K."/>
            <person name="Kawashima K."/>
            <person name="Kishida Y."/>
            <person name="Kiyokawa C."/>
            <person name="Kohara M."/>
            <person name="Matsumoto M."/>
            <person name="Matsuno A."/>
            <person name="Muraki A."/>
            <person name="Nakayama S."/>
            <person name="Nakazaki N."/>
            <person name="Shinpo S."/>
            <person name="Takeuchi C."/>
            <person name="Wada T."/>
            <person name="Watanabe A."/>
            <person name="Yamada M."/>
            <person name="Yasuda M."/>
            <person name="Tabata S."/>
        </authorList>
    </citation>
    <scope>NUCLEOTIDE SEQUENCE [LARGE SCALE GENOMIC DNA]</scope>
    <source>
        <strain>cv. Columbia</strain>
    </source>
</reference>
<reference key="2">
    <citation type="journal article" date="2017" name="Plant J.">
        <title>Araport11: a complete reannotation of the Arabidopsis thaliana reference genome.</title>
        <authorList>
            <person name="Cheng C.Y."/>
            <person name="Krishnakumar V."/>
            <person name="Chan A.P."/>
            <person name="Thibaud-Nissen F."/>
            <person name="Schobel S."/>
            <person name="Town C.D."/>
        </authorList>
    </citation>
    <scope>GENOME REANNOTATION</scope>
    <source>
        <strain>cv. Columbia</strain>
    </source>
</reference>
<reference key="3">
    <citation type="journal article" date="2004" name="J. Plant Physiol.">
        <title>Analysis of an Arabidopsis thaliana protein family, structurally related to cytochromes b561 and potentially involved in catecholamine biochemistry in plants.</title>
        <authorList>
            <person name="Verelst W."/>
            <person name="Asard H."/>
        </authorList>
    </citation>
    <scope>DOMAIN</scope>
    <scope>FUNCTION</scope>
</reference>
<reference key="4">
    <citation type="journal article" date="2005" name="Biochim. Biophys. Acta">
        <title>Cytochrome b561 protein family: expanding roles and versatile transmembrane electron transfer abilities as predicted by a new classification system and protein sequence motif analyses.</title>
        <authorList>
            <person name="Tsubaki M."/>
            <person name="Takeuchi F."/>
            <person name="Nakanishi N."/>
        </authorList>
    </citation>
    <scope>GENE FAMILY</scope>
    <scope>NOMENCLATURE</scope>
</reference>
<reference key="5">
    <citation type="journal article" date="2009" name="Plant Physiol.">
        <title>Auxin-responsive genes AIR12 code for a new family of plasma membrane b-type cytochromes specific to flowering plants.</title>
        <authorList>
            <person name="Preger V."/>
            <person name="Tango N."/>
            <person name="Marchand C."/>
            <person name="Lemaire S.D."/>
            <person name="Carbonera D."/>
            <person name="Di Valentin M."/>
            <person name="Costa A."/>
            <person name="Pupillo P."/>
            <person name="Trost P."/>
        </authorList>
    </citation>
    <scope>DOMAIN</scope>
</reference>
<reference key="6">
    <citation type="journal article" date="2013" name="Antioxid. Redox Signal.">
        <title>Cytochromes b561: ascorbate-mediated trans-membrane electron transport.</title>
        <authorList>
            <person name="Asard H."/>
            <person name="Barbaro R."/>
            <person name="Trost P."/>
            <person name="Berczi A."/>
        </authorList>
    </citation>
    <scope>REVIEW</scope>
</reference>
<keyword id="KW-0249">Electron transport</keyword>
<keyword id="KW-0349">Heme</keyword>
<keyword id="KW-0408">Iron</keyword>
<keyword id="KW-0472">Membrane</keyword>
<keyword id="KW-0479">Metal-binding</keyword>
<keyword id="KW-1185">Reference proteome</keyword>
<keyword id="KW-0732">Signal</keyword>
<keyword id="KW-0812">Transmembrane</keyword>
<keyword id="KW-1133">Transmembrane helix</keyword>
<keyword id="KW-0813">Transport</keyword>
<organism>
    <name type="scientific">Arabidopsis thaliana</name>
    <name type="common">Mouse-ear cress</name>
    <dbReference type="NCBI Taxonomy" id="3702"/>
    <lineage>
        <taxon>Eukaryota</taxon>
        <taxon>Viridiplantae</taxon>
        <taxon>Streptophyta</taxon>
        <taxon>Embryophyta</taxon>
        <taxon>Tracheophyta</taxon>
        <taxon>Spermatophyta</taxon>
        <taxon>Magnoliopsida</taxon>
        <taxon>eudicotyledons</taxon>
        <taxon>Gunneridae</taxon>
        <taxon>Pentapetalae</taxon>
        <taxon>rosids</taxon>
        <taxon>malvids</taxon>
        <taxon>Brassicales</taxon>
        <taxon>Brassicaceae</taxon>
        <taxon>Camelineae</taxon>
        <taxon>Arabidopsis</taxon>
    </lineage>
</organism>
<name>B561H_ARATH</name>
<evidence type="ECO:0000250" key="1">
    <source>
        <dbReference type="UniProtKB" id="Q9SWS1"/>
    </source>
</evidence>
<evidence type="ECO:0000255" key="2"/>
<evidence type="ECO:0000255" key="3">
    <source>
        <dbReference type="PROSITE-ProRule" id="PRU00242"/>
    </source>
</evidence>
<evidence type="ECO:0000255" key="4">
    <source>
        <dbReference type="PROSITE-ProRule" id="PRU00246"/>
    </source>
</evidence>
<evidence type="ECO:0000269" key="5">
    <source>
    </source>
</evidence>
<evidence type="ECO:0000269" key="6">
    <source>
    </source>
</evidence>
<evidence type="ECO:0000305" key="7"/>
<sequence>MSLSSRATLVVLCCLFMLIPSFTTAATEQGLHARSRCESYSFNNGKSFRSCTDLLVLNSYLHFNYAQETGVLEIAYHHSNLESSSWISWAINPTSKGMVGAQALVAYRNSTSGVMRAYTSSINSYSPMLQESPLSLRVTQVSAEYSNGEMMIFATLVLPPNTTVVNHLWQDGPLKEGDRLGMHAMSGDNLKSMASLDLLSGQVTTTKSVNRNMLLVKQIHAIVNALSWGILMPIGVMAARYMKNYEVLDPTWFYIHVVCQTTGYFSGLIGGLGTAIYMARHTGMRTTLHTVIGLLLFALGFLQILSLKARPNKDHKYRKYWNWYHHTMGYIVIVLSIYNIYKGLSILQPGSIWKIAYTTIICCIAAFAVVMEILQFKKRWARLFFKKSKDVEADQPTVSVDVIGETEKAERKKASGGIEIQIENYNITKNFMIPSVFVISYPHTSPPLLAFHSYHHPSTSIAATAA</sequence>
<gene>
    <name type="ordered locus">At3g59070</name>
    <name type="ORF">F17J16_120</name>
</gene>